<feature type="chain" id="PRO_1000203593" description="Lipoprotein signal peptidase">
    <location>
        <begin position="1"/>
        <end position="164"/>
    </location>
</feature>
<feature type="transmembrane region" description="Helical" evidence="1">
    <location>
        <begin position="12"/>
        <end position="32"/>
    </location>
</feature>
<feature type="transmembrane region" description="Helical" evidence="1">
    <location>
        <begin position="70"/>
        <end position="90"/>
    </location>
</feature>
<feature type="transmembrane region" description="Helical" evidence="1">
    <location>
        <begin position="102"/>
        <end position="122"/>
    </location>
</feature>
<feature type="transmembrane region" description="Helical" evidence="1">
    <location>
        <begin position="137"/>
        <end position="157"/>
    </location>
</feature>
<feature type="active site" evidence="1">
    <location>
        <position position="123"/>
    </location>
</feature>
<feature type="active site" evidence="1">
    <location>
        <position position="141"/>
    </location>
</feature>
<gene>
    <name evidence="1" type="primary">lspA</name>
    <name type="ordered locus">BWG_0025</name>
</gene>
<organism>
    <name type="scientific">Escherichia coli (strain K12 / MC4100 / BW2952)</name>
    <dbReference type="NCBI Taxonomy" id="595496"/>
    <lineage>
        <taxon>Bacteria</taxon>
        <taxon>Pseudomonadati</taxon>
        <taxon>Pseudomonadota</taxon>
        <taxon>Gammaproteobacteria</taxon>
        <taxon>Enterobacterales</taxon>
        <taxon>Enterobacteriaceae</taxon>
        <taxon>Escherichia</taxon>
    </lineage>
</organism>
<accession>C4ZPV3</accession>
<protein>
    <recommendedName>
        <fullName evidence="1">Lipoprotein signal peptidase</fullName>
        <ecNumber evidence="1">3.4.23.36</ecNumber>
    </recommendedName>
    <alternativeName>
        <fullName evidence="1">Prolipoprotein signal peptidase</fullName>
    </alternativeName>
    <alternativeName>
        <fullName evidence="1">Signal peptidase II</fullName>
        <shortName evidence="1">SPase II</shortName>
    </alternativeName>
</protein>
<keyword id="KW-0064">Aspartyl protease</keyword>
<keyword id="KW-0997">Cell inner membrane</keyword>
<keyword id="KW-1003">Cell membrane</keyword>
<keyword id="KW-0378">Hydrolase</keyword>
<keyword id="KW-0472">Membrane</keyword>
<keyword id="KW-0645">Protease</keyword>
<keyword id="KW-0812">Transmembrane</keyword>
<keyword id="KW-1133">Transmembrane helix</keyword>
<name>LSPA_ECOBW</name>
<sequence length="164" mass="18156">MSQSICSTGLRWLWLVVVVLIIDLGSKYLILQNFALGDTVPLFPSLNLHYARNYGAAFSFLADSGGWQRWFFAGIAIGISVILAVMMYRSKATQKLNNIAYALIIGGALGNLFDRLWHGFVVDMIDFYVGDWHFATFNLADTAICVGAALIVLEGFLPSRAKKQ</sequence>
<reference key="1">
    <citation type="journal article" date="2009" name="J. Bacteriol.">
        <title>Genomic sequencing reveals regulatory mutations and recombinational events in the widely used MC4100 lineage of Escherichia coli K-12.</title>
        <authorList>
            <person name="Ferenci T."/>
            <person name="Zhou Z."/>
            <person name="Betteridge T."/>
            <person name="Ren Y."/>
            <person name="Liu Y."/>
            <person name="Feng L."/>
            <person name="Reeves P.R."/>
            <person name="Wang L."/>
        </authorList>
    </citation>
    <scope>NUCLEOTIDE SEQUENCE [LARGE SCALE GENOMIC DNA]</scope>
    <source>
        <strain>K12 / MC4100 / BW2952</strain>
    </source>
</reference>
<evidence type="ECO:0000255" key="1">
    <source>
        <dbReference type="HAMAP-Rule" id="MF_00161"/>
    </source>
</evidence>
<dbReference type="EC" id="3.4.23.36" evidence="1"/>
<dbReference type="EMBL" id="CP001396">
    <property type="protein sequence ID" value="ACR65280.1"/>
    <property type="molecule type" value="Genomic_DNA"/>
</dbReference>
<dbReference type="RefSeq" id="WP_000083372.1">
    <property type="nucleotide sequence ID" value="NC_012759.1"/>
</dbReference>
<dbReference type="SMR" id="C4ZPV3"/>
<dbReference type="MEROPS" id="A08.001"/>
<dbReference type="GeneID" id="93777409"/>
<dbReference type="KEGG" id="ebw:BWG_0025"/>
<dbReference type="HOGENOM" id="CLU_083252_4_0_6"/>
<dbReference type="UniPathway" id="UPA00665"/>
<dbReference type="GO" id="GO:0005886">
    <property type="term" value="C:plasma membrane"/>
    <property type="evidence" value="ECO:0007669"/>
    <property type="project" value="UniProtKB-SubCell"/>
</dbReference>
<dbReference type="GO" id="GO:0004190">
    <property type="term" value="F:aspartic-type endopeptidase activity"/>
    <property type="evidence" value="ECO:0007669"/>
    <property type="project" value="UniProtKB-UniRule"/>
</dbReference>
<dbReference type="GO" id="GO:0006508">
    <property type="term" value="P:proteolysis"/>
    <property type="evidence" value="ECO:0007669"/>
    <property type="project" value="UniProtKB-KW"/>
</dbReference>
<dbReference type="HAMAP" id="MF_00161">
    <property type="entry name" value="LspA"/>
    <property type="match status" value="1"/>
</dbReference>
<dbReference type="InterPro" id="IPR001872">
    <property type="entry name" value="Peptidase_A8"/>
</dbReference>
<dbReference type="NCBIfam" id="TIGR00077">
    <property type="entry name" value="lspA"/>
    <property type="match status" value="1"/>
</dbReference>
<dbReference type="PANTHER" id="PTHR33695">
    <property type="entry name" value="LIPOPROTEIN SIGNAL PEPTIDASE"/>
    <property type="match status" value="1"/>
</dbReference>
<dbReference type="PANTHER" id="PTHR33695:SF1">
    <property type="entry name" value="LIPOPROTEIN SIGNAL PEPTIDASE"/>
    <property type="match status" value="1"/>
</dbReference>
<dbReference type="Pfam" id="PF01252">
    <property type="entry name" value="Peptidase_A8"/>
    <property type="match status" value="1"/>
</dbReference>
<dbReference type="PRINTS" id="PR00781">
    <property type="entry name" value="LIPOSIGPTASE"/>
</dbReference>
<dbReference type="PROSITE" id="PS00855">
    <property type="entry name" value="SPASE_II"/>
    <property type="match status" value="1"/>
</dbReference>
<comment type="function">
    <text evidence="1">This protein specifically catalyzes the removal of signal peptides from prolipoproteins.</text>
</comment>
<comment type="catalytic activity">
    <reaction evidence="1">
        <text>Release of signal peptides from bacterial membrane prolipoproteins. Hydrolyzes -Xaa-Yaa-Zaa-|-(S,diacylglyceryl)Cys-, in which Xaa is hydrophobic (preferably Leu), and Yaa (Ala or Ser) and Zaa (Gly or Ala) have small, neutral side chains.</text>
        <dbReference type="EC" id="3.4.23.36"/>
    </reaction>
</comment>
<comment type="pathway">
    <text evidence="1">Protein modification; lipoprotein biosynthesis (signal peptide cleavage).</text>
</comment>
<comment type="subcellular location">
    <subcellularLocation>
        <location evidence="1">Cell inner membrane</location>
        <topology evidence="1">Multi-pass membrane protein</topology>
    </subcellularLocation>
</comment>
<comment type="similarity">
    <text evidence="1">Belongs to the peptidase A8 family.</text>
</comment>
<proteinExistence type="inferred from homology"/>